<reference key="1">
    <citation type="journal article" date="2000" name="Nature">
        <title>Genome sequence of the endocellular bacterial symbiont of aphids Buchnera sp. APS.</title>
        <authorList>
            <person name="Shigenobu S."/>
            <person name="Watanabe H."/>
            <person name="Hattori M."/>
            <person name="Sakaki Y."/>
            <person name="Ishikawa H."/>
        </authorList>
    </citation>
    <scope>NUCLEOTIDE SEQUENCE [LARGE SCALE GENOMIC DNA]</scope>
    <source>
        <strain>APS</strain>
    </source>
</reference>
<protein>
    <recommendedName>
        <fullName>Putative flagellar protein FlgJ homolog</fullName>
    </recommendedName>
</protein>
<sequence length="99" mass="11481">MNDNLLLSNISDYNVQFINELKYQVRINPKKHALQTAKEVEGVFIQVLLKSMRSSLLKDNLLDNNQSRLYTDIYDQQLSQEISKKGIGLTDIILKQIEK</sequence>
<gene>
    <name type="primary">flgJ</name>
    <name type="ordered locus">BU345</name>
</gene>
<keyword id="KW-1005">Bacterial flagellum biogenesis</keyword>
<keyword id="KW-1185">Reference proteome</keyword>
<comment type="miscellaneous">
    <text>This protein is shorter than other FlgJ proteins and lacks the muramidase domain. It may be degenerating and may no longer be functional.</text>
</comment>
<comment type="similarity">
    <text evidence="1">Belongs to the FlgJ family.</text>
</comment>
<accession>P57427</accession>
<feature type="chain" id="PRO_0000165711" description="Putative flagellar protein FlgJ homolog">
    <location>
        <begin position="1"/>
        <end position="99"/>
    </location>
</feature>
<organism>
    <name type="scientific">Buchnera aphidicola subsp. Acyrthosiphon pisum (strain APS)</name>
    <name type="common">Acyrthosiphon pisum symbiotic bacterium</name>
    <dbReference type="NCBI Taxonomy" id="107806"/>
    <lineage>
        <taxon>Bacteria</taxon>
        <taxon>Pseudomonadati</taxon>
        <taxon>Pseudomonadota</taxon>
        <taxon>Gammaproteobacteria</taxon>
        <taxon>Enterobacterales</taxon>
        <taxon>Erwiniaceae</taxon>
        <taxon>Buchnera</taxon>
    </lineage>
</organism>
<proteinExistence type="inferred from homology"/>
<dbReference type="EMBL" id="BA000003">
    <property type="protein sequence ID" value="BAB13050.1"/>
    <property type="molecule type" value="Genomic_DNA"/>
</dbReference>
<dbReference type="RefSeq" id="NP_240164.1">
    <property type="nucleotide sequence ID" value="NC_002528.1"/>
</dbReference>
<dbReference type="RefSeq" id="WP_009874300.1">
    <property type="nucleotide sequence ID" value="NC_002528.1"/>
</dbReference>
<dbReference type="SMR" id="P57427"/>
<dbReference type="STRING" id="563178.BUAP5A_339"/>
<dbReference type="EnsemblBacteria" id="BAB13050">
    <property type="protein sequence ID" value="BAB13050"/>
    <property type="gene ID" value="BAB13050"/>
</dbReference>
<dbReference type="KEGG" id="buc:BU345"/>
<dbReference type="PATRIC" id="fig|107806.10.peg.357"/>
<dbReference type="eggNOG" id="COG3951">
    <property type="taxonomic scope" value="Bacteria"/>
</dbReference>
<dbReference type="HOGENOM" id="CLU_130187_1_0_6"/>
<dbReference type="Proteomes" id="UP000001806">
    <property type="component" value="Chromosome"/>
</dbReference>
<dbReference type="GO" id="GO:0044781">
    <property type="term" value="P:bacterial-type flagellum organization"/>
    <property type="evidence" value="ECO:0007669"/>
    <property type="project" value="UniProtKB-KW"/>
</dbReference>
<dbReference type="InterPro" id="IPR019301">
    <property type="entry name" value="Flagellar_prot_FlgJ_N"/>
</dbReference>
<dbReference type="Pfam" id="PF10135">
    <property type="entry name" value="Rod-binding"/>
    <property type="match status" value="1"/>
</dbReference>
<dbReference type="PRINTS" id="PR01002">
    <property type="entry name" value="FLGFLGJ"/>
</dbReference>
<name>FLGJ_BUCAI</name>
<evidence type="ECO:0000305" key="1"/>